<evidence type="ECO:0000255" key="1">
    <source>
        <dbReference type="HAMAP-Rule" id="MF_00116"/>
    </source>
</evidence>
<name>DUT_ACIBY</name>
<keyword id="KW-0378">Hydrolase</keyword>
<keyword id="KW-0460">Magnesium</keyword>
<keyword id="KW-0479">Metal-binding</keyword>
<keyword id="KW-0546">Nucleotide metabolism</keyword>
<organism>
    <name type="scientific">Acinetobacter baumannii (strain AYE)</name>
    <dbReference type="NCBI Taxonomy" id="509173"/>
    <lineage>
        <taxon>Bacteria</taxon>
        <taxon>Pseudomonadati</taxon>
        <taxon>Pseudomonadota</taxon>
        <taxon>Gammaproteobacteria</taxon>
        <taxon>Moraxellales</taxon>
        <taxon>Moraxellaceae</taxon>
        <taxon>Acinetobacter</taxon>
        <taxon>Acinetobacter calcoaceticus/baumannii complex</taxon>
    </lineage>
</organism>
<protein>
    <recommendedName>
        <fullName evidence="1">Deoxyuridine 5'-triphosphate nucleotidohydrolase</fullName>
        <shortName evidence="1">dUTPase</shortName>
        <ecNumber evidence="1">3.6.1.23</ecNumber>
    </recommendedName>
    <alternativeName>
        <fullName evidence="1">dUTP pyrophosphatase</fullName>
    </alternativeName>
</protein>
<accession>B0V8Y8</accession>
<gene>
    <name evidence="1" type="primary">dut</name>
    <name type="ordered locus">ABAYE2929</name>
</gene>
<dbReference type="EC" id="3.6.1.23" evidence="1"/>
<dbReference type="EMBL" id="CU459141">
    <property type="protein sequence ID" value="CAM87751.1"/>
    <property type="molecule type" value="Genomic_DNA"/>
</dbReference>
<dbReference type="RefSeq" id="WP_000868152.1">
    <property type="nucleotide sequence ID" value="NZ_JBDGFB010000015.1"/>
</dbReference>
<dbReference type="SMR" id="B0V8Y8"/>
<dbReference type="EnsemblBacteria" id="CAM87751">
    <property type="protein sequence ID" value="CAM87751"/>
    <property type="gene ID" value="ABAYE2929"/>
</dbReference>
<dbReference type="GeneID" id="92892815"/>
<dbReference type="KEGG" id="aby:ABAYE2929"/>
<dbReference type="HOGENOM" id="CLU_068508_1_1_6"/>
<dbReference type="UniPathway" id="UPA00610">
    <property type="reaction ID" value="UER00666"/>
</dbReference>
<dbReference type="GO" id="GO:0004170">
    <property type="term" value="F:dUTP diphosphatase activity"/>
    <property type="evidence" value="ECO:0007669"/>
    <property type="project" value="UniProtKB-UniRule"/>
</dbReference>
<dbReference type="GO" id="GO:0000287">
    <property type="term" value="F:magnesium ion binding"/>
    <property type="evidence" value="ECO:0007669"/>
    <property type="project" value="UniProtKB-UniRule"/>
</dbReference>
<dbReference type="GO" id="GO:0006226">
    <property type="term" value="P:dUMP biosynthetic process"/>
    <property type="evidence" value="ECO:0007669"/>
    <property type="project" value="UniProtKB-UniRule"/>
</dbReference>
<dbReference type="GO" id="GO:0046081">
    <property type="term" value="P:dUTP catabolic process"/>
    <property type="evidence" value="ECO:0007669"/>
    <property type="project" value="InterPro"/>
</dbReference>
<dbReference type="CDD" id="cd07557">
    <property type="entry name" value="trimeric_dUTPase"/>
    <property type="match status" value="1"/>
</dbReference>
<dbReference type="FunFam" id="2.70.40.10:FF:000002">
    <property type="entry name" value="dUTP diphosphatase"/>
    <property type="match status" value="1"/>
</dbReference>
<dbReference type="Gene3D" id="2.70.40.10">
    <property type="match status" value="1"/>
</dbReference>
<dbReference type="HAMAP" id="MF_00116">
    <property type="entry name" value="dUTPase_bact"/>
    <property type="match status" value="1"/>
</dbReference>
<dbReference type="InterPro" id="IPR008181">
    <property type="entry name" value="dUTPase"/>
</dbReference>
<dbReference type="InterPro" id="IPR029054">
    <property type="entry name" value="dUTPase-like"/>
</dbReference>
<dbReference type="InterPro" id="IPR036157">
    <property type="entry name" value="dUTPase-like_sf"/>
</dbReference>
<dbReference type="InterPro" id="IPR033704">
    <property type="entry name" value="dUTPase_trimeric"/>
</dbReference>
<dbReference type="NCBIfam" id="TIGR00576">
    <property type="entry name" value="dut"/>
    <property type="match status" value="1"/>
</dbReference>
<dbReference type="NCBIfam" id="NF001862">
    <property type="entry name" value="PRK00601.1"/>
    <property type="match status" value="1"/>
</dbReference>
<dbReference type="PANTHER" id="PTHR11241">
    <property type="entry name" value="DEOXYURIDINE 5'-TRIPHOSPHATE NUCLEOTIDOHYDROLASE"/>
    <property type="match status" value="1"/>
</dbReference>
<dbReference type="PANTHER" id="PTHR11241:SF0">
    <property type="entry name" value="DEOXYURIDINE 5'-TRIPHOSPHATE NUCLEOTIDOHYDROLASE"/>
    <property type="match status" value="1"/>
</dbReference>
<dbReference type="Pfam" id="PF00692">
    <property type="entry name" value="dUTPase"/>
    <property type="match status" value="1"/>
</dbReference>
<dbReference type="SUPFAM" id="SSF51283">
    <property type="entry name" value="dUTPase-like"/>
    <property type="match status" value="1"/>
</dbReference>
<proteinExistence type="inferred from homology"/>
<feature type="chain" id="PRO_1000094938" description="Deoxyuridine 5'-triphosphate nucleotidohydrolase">
    <location>
        <begin position="1"/>
        <end position="150"/>
    </location>
</feature>
<feature type="binding site" evidence="1">
    <location>
        <begin position="69"/>
        <end position="71"/>
    </location>
    <ligand>
        <name>substrate</name>
    </ligand>
</feature>
<feature type="binding site" evidence="1">
    <location>
        <position position="82"/>
    </location>
    <ligand>
        <name>substrate</name>
    </ligand>
</feature>
<feature type="binding site" evidence="1">
    <location>
        <begin position="86"/>
        <end position="88"/>
    </location>
    <ligand>
        <name>substrate</name>
    </ligand>
</feature>
<feature type="binding site" evidence="1">
    <location>
        <position position="96"/>
    </location>
    <ligand>
        <name>substrate</name>
    </ligand>
</feature>
<reference key="1">
    <citation type="journal article" date="2008" name="PLoS ONE">
        <title>Comparative analysis of Acinetobacters: three genomes for three lifestyles.</title>
        <authorList>
            <person name="Vallenet D."/>
            <person name="Nordmann P."/>
            <person name="Barbe V."/>
            <person name="Poirel L."/>
            <person name="Mangenot S."/>
            <person name="Bataille E."/>
            <person name="Dossat C."/>
            <person name="Gas S."/>
            <person name="Kreimeyer A."/>
            <person name="Lenoble P."/>
            <person name="Oztas S."/>
            <person name="Poulain J."/>
            <person name="Segurens B."/>
            <person name="Robert C."/>
            <person name="Abergel C."/>
            <person name="Claverie J.-M."/>
            <person name="Raoult D."/>
            <person name="Medigue C."/>
            <person name="Weissenbach J."/>
            <person name="Cruveiller S."/>
        </authorList>
    </citation>
    <scope>NUCLEOTIDE SEQUENCE [LARGE SCALE GENOMIC DNA]</scope>
    <source>
        <strain>AYE</strain>
    </source>
</reference>
<sequence>MKVQVKLLDPRLGKEWPLPSYATAGSAGLDLRACLDEAIEIEPGQTVLVKTGMAIYIHDVNFAGLILPRSGLGHKHGIVLGNLVGLIDSDYQGELMVSVWNRGQTTFRLEPGERLAQYVLVPVVQAEFEQVEEFEETLRGAGGFGHTGKQ</sequence>
<comment type="function">
    <text evidence="1">This enzyme is involved in nucleotide metabolism: it produces dUMP, the immediate precursor of thymidine nucleotides and it decreases the intracellular concentration of dUTP so that uracil cannot be incorporated into DNA.</text>
</comment>
<comment type="catalytic activity">
    <reaction evidence="1">
        <text>dUTP + H2O = dUMP + diphosphate + H(+)</text>
        <dbReference type="Rhea" id="RHEA:10248"/>
        <dbReference type="ChEBI" id="CHEBI:15377"/>
        <dbReference type="ChEBI" id="CHEBI:15378"/>
        <dbReference type="ChEBI" id="CHEBI:33019"/>
        <dbReference type="ChEBI" id="CHEBI:61555"/>
        <dbReference type="ChEBI" id="CHEBI:246422"/>
        <dbReference type="EC" id="3.6.1.23"/>
    </reaction>
</comment>
<comment type="cofactor">
    <cofactor evidence="1">
        <name>Mg(2+)</name>
        <dbReference type="ChEBI" id="CHEBI:18420"/>
    </cofactor>
</comment>
<comment type="pathway">
    <text evidence="1">Pyrimidine metabolism; dUMP biosynthesis; dUMP from dCTP (dUTP route): step 2/2.</text>
</comment>
<comment type="similarity">
    <text evidence="1">Belongs to the dUTPase family.</text>
</comment>